<accession>B1IC43</accession>
<gene>
    <name evidence="1" type="primary">rnc</name>
    <name type="ordered locus">SPH_1363</name>
</gene>
<evidence type="ECO:0000255" key="1">
    <source>
        <dbReference type="HAMAP-Rule" id="MF_00104"/>
    </source>
</evidence>
<keyword id="KW-0963">Cytoplasm</keyword>
<keyword id="KW-0255">Endonuclease</keyword>
<keyword id="KW-0378">Hydrolase</keyword>
<keyword id="KW-0460">Magnesium</keyword>
<keyword id="KW-0479">Metal-binding</keyword>
<keyword id="KW-0507">mRNA processing</keyword>
<keyword id="KW-0540">Nuclease</keyword>
<keyword id="KW-0694">RNA-binding</keyword>
<keyword id="KW-0698">rRNA processing</keyword>
<keyword id="KW-0699">rRNA-binding</keyword>
<keyword id="KW-0819">tRNA processing</keyword>
<proteinExistence type="inferred from homology"/>
<feature type="chain" id="PRO_1000094136" description="Ribonuclease 3">
    <location>
        <begin position="1"/>
        <end position="232"/>
    </location>
</feature>
<feature type="domain" description="RNase III" evidence="1">
    <location>
        <begin position="5"/>
        <end position="134"/>
    </location>
</feature>
<feature type="domain" description="DRBM" evidence="1">
    <location>
        <begin position="160"/>
        <end position="229"/>
    </location>
</feature>
<feature type="active site" evidence="1">
    <location>
        <position position="51"/>
    </location>
</feature>
<feature type="active site" evidence="1">
    <location>
        <position position="123"/>
    </location>
</feature>
<feature type="binding site" evidence="1">
    <location>
        <position position="47"/>
    </location>
    <ligand>
        <name>Mg(2+)</name>
        <dbReference type="ChEBI" id="CHEBI:18420"/>
    </ligand>
</feature>
<feature type="binding site" evidence="1">
    <location>
        <position position="120"/>
    </location>
    <ligand>
        <name>Mg(2+)</name>
        <dbReference type="ChEBI" id="CHEBI:18420"/>
    </ligand>
</feature>
<feature type="binding site" evidence="1">
    <location>
        <position position="123"/>
    </location>
    <ligand>
        <name>Mg(2+)</name>
        <dbReference type="ChEBI" id="CHEBI:18420"/>
    </ligand>
</feature>
<name>RNC_STRPI</name>
<reference key="1">
    <citation type="journal article" date="2010" name="Genome Biol.">
        <title>Structure and dynamics of the pan-genome of Streptococcus pneumoniae and closely related species.</title>
        <authorList>
            <person name="Donati C."/>
            <person name="Hiller N.L."/>
            <person name="Tettelin H."/>
            <person name="Muzzi A."/>
            <person name="Croucher N.J."/>
            <person name="Angiuoli S.V."/>
            <person name="Oggioni M."/>
            <person name="Dunning Hotopp J.C."/>
            <person name="Hu F.Z."/>
            <person name="Riley D.R."/>
            <person name="Covacci A."/>
            <person name="Mitchell T.J."/>
            <person name="Bentley S.D."/>
            <person name="Kilian M."/>
            <person name="Ehrlich G.D."/>
            <person name="Rappuoli R."/>
            <person name="Moxon E.R."/>
            <person name="Masignani V."/>
        </authorList>
    </citation>
    <scope>NUCLEOTIDE SEQUENCE [LARGE SCALE GENOMIC DNA]</scope>
    <source>
        <strain>Hungary19A-6</strain>
    </source>
</reference>
<organism>
    <name type="scientific">Streptococcus pneumoniae (strain Hungary19A-6)</name>
    <dbReference type="NCBI Taxonomy" id="487214"/>
    <lineage>
        <taxon>Bacteria</taxon>
        <taxon>Bacillati</taxon>
        <taxon>Bacillota</taxon>
        <taxon>Bacilli</taxon>
        <taxon>Lactobacillales</taxon>
        <taxon>Streptococcaceae</taxon>
        <taxon>Streptococcus</taxon>
    </lineage>
</organism>
<dbReference type="EC" id="3.1.26.3" evidence="1"/>
<dbReference type="EMBL" id="CP000936">
    <property type="protein sequence ID" value="ACA36658.1"/>
    <property type="molecule type" value="Genomic_DNA"/>
</dbReference>
<dbReference type="RefSeq" id="WP_000661487.1">
    <property type="nucleotide sequence ID" value="NC_010380.1"/>
</dbReference>
<dbReference type="SMR" id="B1IC43"/>
<dbReference type="GeneID" id="93739530"/>
<dbReference type="KEGG" id="spv:SPH_1363"/>
<dbReference type="HOGENOM" id="CLU_000907_1_3_9"/>
<dbReference type="Proteomes" id="UP000002163">
    <property type="component" value="Chromosome"/>
</dbReference>
<dbReference type="GO" id="GO:0005737">
    <property type="term" value="C:cytoplasm"/>
    <property type="evidence" value="ECO:0007669"/>
    <property type="project" value="UniProtKB-SubCell"/>
</dbReference>
<dbReference type="GO" id="GO:0003725">
    <property type="term" value="F:double-stranded RNA binding"/>
    <property type="evidence" value="ECO:0007669"/>
    <property type="project" value="TreeGrafter"/>
</dbReference>
<dbReference type="GO" id="GO:0046872">
    <property type="term" value="F:metal ion binding"/>
    <property type="evidence" value="ECO:0007669"/>
    <property type="project" value="UniProtKB-KW"/>
</dbReference>
<dbReference type="GO" id="GO:0004525">
    <property type="term" value="F:ribonuclease III activity"/>
    <property type="evidence" value="ECO:0007669"/>
    <property type="project" value="UniProtKB-UniRule"/>
</dbReference>
<dbReference type="GO" id="GO:0019843">
    <property type="term" value="F:rRNA binding"/>
    <property type="evidence" value="ECO:0007669"/>
    <property type="project" value="UniProtKB-KW"/>
</dbReference>
<dbReference type="GO" id="GO:0006397">
    <property type="term" value="P:mRNA processing"/>
    <property type="evidence" value="ECO:0007669"/>
    <property type="project" value="UniProtKB-UniRule"/>
</dbReference>
<dbReference type="GO" id="GO:0010468">
    <property type="term" value="P:regulation of gene expression"/>
    <property type="evidence" value="ECO:0007669"/>
    <property type="project" value="TreeGrafter"/>
</dbReference>
<dbReference type="GO" id="GO:0006364">
    <property type="term" value="P:rRNA processing"/>
    <property type="evidence" value="ECO:0007669"/>
    <property type="project" value="UniProtKB-UniRule"/>
</dbReference>
<dbReference type="GO" id="GO:0008033">
    <property type="term" value="P:tRNA processing"/>
    <property type="evidence" value="ECO:0007669"/>
    <property type="project" value="UniProtKB-KW"/>
</dbReference>
<dbReference type="CDD" id="cd10845">
    <property type="entry name" value="DSRM_RNAse_III_family"/>
    <property type="match status" value="1"/>
</dbReference>
<dbReference type="CDD" id="cd00593">
    <property type="entry name" value="RIBOc"/>
    <property type="match status" value="1"/>
</dbReference>
<dbReference type="FunFam" id="1.10.1520.10:FF:000001">
    <property type="entry name" value="Ribonuclease 3"/>
    <property type="match status" value="1"/>
</dbReference>
<dbReference type="FunFam" id="3.30.160.20:FF:000003">
    <property type="entry name" value="Ribonuclease 3"/>
    <property type="match status" value="1"/>
</dbReference>
<dbReference type="Gene3D" id="3.30.160.20">
    <property type="match status" value="1"/>
</dbReference>
<dbReference type="Gene3D" id="1.10.1520.10">
    <property type="entry name" value="Ribonuclease III domain"/>
    <property type="match status" value="1"/>
</dbReference>
<dbReference type="HAMAP" id="MF_00104">
    <property type="entry name" value="RNase_III"/>
    <property type="match status" value="1"/>
</dbReference>
<dbReference type="InterPro" id="IPR014720">
    <property type="entry name" value="dsRBD_dom"/>
</dbReference>
<dbReference type="InterPro" id="IPR011907">
    <property type="entry name" value="RNase_III"/>
</dbReference>
<dbReference type="InterPro" id="IPR000999">
    <property type="entry name" value="RNase_III_dom"/>
</dbReference>
<dbReference type="InterPro" id="IPR036389">
    <property type="entry name" value="RNase_III_sf"/>
</dbReference>
<dbReference type="NCBIfam" id="TIGR02191">
    <property type="entry name" value="RNaseIII"/>
    <property type="match status" value="1"/>
</dbReference>
<dbReference type="PANTHER" id="PTHR11207:SF0">
    <property type="entry name" value="RIBONUCLEASE 3"/>
    <property type="match status" value="1"/>
</dbReference>
<dbReference type="PANTHER" id="PTHR11207">
    <property type="entry name" value="RIBONUCLEASE III"/>
    <property type="match status" value="1"/>
</dbReference>
<dbReference type="Pfam" id="PF00035">
    <property type="entry name" value="dsrm"/>
    <property type="match status" value="1"/>
</dbReference>
<dbReference type="Pfam" id="PF14622">
    <property type="entry name" value="Ribonucleas_3_3"/>
    <property type="match status" value="1"/>
</dbReference>
<dbReference type="SMART" id="SM00358">
    <property type="entry name" value="DSRM"/>
    <property type="match status" value="1"/>
</dbReference>
<dbReference type="SMART" id="SM00535">
    <property type="entry name" value="RIBOc"/>
    <property type="match status" value="1"/>
</dbReference>
<dbReference type="SUPFAM" id="SSF54768">
    <property type="entry name" value="dsRNA-binding domain-like"/>
    <property type="match status" value="1"/>
</dbReference>
<dbReference type="SUPFAM" id="SSF69065">
    <property type="entry name" value="RNase III domain-like"/>
    <property type="match status" value="1"/>
</dbReference>
<dbReference type="PROSITE" id="PS50137">
    <property type="entry name" value="DS_RBD"/>
    <property type="match status" value="1"/>
</dbReference>
<dbReference type="PROSITE" id="PS00517">
    <property type="entry name" value="RNASE_3_1"/>
    <property type="match status" value="1"/>
</dbReference>
<dbReference type="PROSITE" id="PS50142">
    <property type="entry name" value="RNASE_3_2"/>
    <property type="match status" value="1"/>
</dbReference>
<comment type="function">
    <text evidence="1">Digests double-stranded RNA. Involved in the processing of primary rRNA transcript to yield the immediate precursors to the large and small rRNAs (23S and 16S). Processes some mRNAs, and tRNAs when they are encoded in the rRNA operon. Processes pre-crRNA and tracrRNA of type II CRISPR loci if present in the organism.</text>
</comment>
<comment type="catalytic activity">
    <reaction evidence="1">
        <text>Endonucleolytic cleavage to 5'-phosphomonoester.</text>
        <dbReference type="EC" id="3.1.26.3"/>
    </reaction>
</comment>
<comment type="cofactor">
    <cofactor evidence="1">
        <name>Mg(2+)</name>
        <dbReference type="ChEBI" id="CHEBI:18420"/>
    </cofactor>
</comment>
<comment type="subunit">
    <text evidence="1">Homodimer.</text>
</comment>
<comment type="subcellular location">
    <subcellularLocation>
        <location evidence="1">Cytoplasm</location>
    </subcellularLocation>
</comment>
<comment type="similarity">
    <text evidence="1">Belongs to the ribonuclease III family.</text>
</comment>
<protein>
    <recommendedName>
        <fullName evidence="1">Ribonuclease 3</fullName>
        <ecNumber evidence="1">3.1.26.3</ecNumber>
    </recommendedName>
    <alternativeName>
        <fullName evidence="1">Ribonuclease III</fullName>
        <shortName evidence="1">RNase III</shortName>
    </alternativeName>
</protein>
<sequence>MKELQTVLKNHFAIEFADKNLLETAFTHTSYANEHRLLKISHNERLEFLGDAVLQLLISEYLYKKYPKKPEGDLSKLRAMIVREESLAGFARDCQFDQFIKLGKGEEKSGGRNRDTILGDAFEAFLGALLLDKDVAKVKEFIYQVMIPKVEAGEFEMITDYKTHLQELLQVNGDVAIRYQVISETGPAHDKVFDVEVLVEGKSIGQGQGRSKKLAEQEAAKNAVEKGLDSCI</sequence>